<name>KDSB_MAIZE</name>
<organism>
    <name type="scientific">Zea mays</name>
    <name type="common">Maize</name>
    <dbReference type="NCBI Taxonomy" id="4577"/>
    <lineage>
        <taxon>Eukaryota</taxon>
        <taxon>Viridiplantae</taxon>
        <taxon>Streptophyta</taxon>
        <taxon>Embryophyta</taxon>
        <taxon>Tracheophyta</taxon>
        <taxon>Spermatophyta</taxon>
        <taxon>Magnoliopsida</taxon>
        <taxon>Liliopsida</taxon>
        <taxon>Poales</taxon>
        <taxon>Poaceae</taxon>
        <taxon>PACMAD clade</taxon>
        <taxon>Panicoideae</taxon>
        <taxon>Andropogonodae</taxon>
        <taxon>Andropogoneae</taxon>
        <taxon>Tripsacinae</taxon>
        <taxon>Zea</taxon>
    </lineage>
</organism>
<comment type="function">
    <text evidence="1 3">Catalyzes the production of the sugar nucleotide CMP-3-deoxy-D-manno-octulosonate (CMP-KDO) (PubMed:10829033). CTP is the preferred nucleotide donor, and it can partially be replaced with UTP but not with ATP (PubMed:10829033). Activates KDO during the biosynthesis of rhamnogalacturonan II (RG-II), a structurally complex pectic polysaccharide of the primary cell wall (By similarity). RG-II is essential for the cell wall integrity of rapidly growing tissues and pollen tube growth and elongation (By similarity).</text>
</comment>
<comment type="catalytic activity">
    <reaction evidence="3">
        <text>3-deoxy-alpha-D-manno-oct-2-ulosonate + CTP = CMP-3-deoxy-beta-D-manno-octulosonate + diphosphate</text>
        <dbReference type="Rhea" id="RHEA:23448"/>
        <dbReference type="ChEBI" id="CHEBI:33019"/>
        <dbReference type="ChEBI" id="CHEBI:37563"/>
        <dbReference type="ChEBI" id="CHEBI:85986"/>
        <dbReference type="ChEBI" id="CHEBI:85987"/>
        <dbReference type="EC" id="2.7.7.38"/>
    </reaction>
</comment>
<comment type="cofactor">
    <cofactor evidence="1">
        <name>Mg(2+)</name>
        <dbReference type="ChEBI" id="CHEBI:18420"/>
    </cofactor>
</comment>
<comment type="biophysicochemical properties">
    <phDependence>
        <text evidence="3">Optimum pH is 9.5.</text>
    </phDependence>
</comment>
<comment type="pathway">
    <text evidence="5">Nucleotide-sugar biosynthesis; CMP-3-deoxy-D-manno-octulosonate biosynthesis; CMP-3-deoxy-D-manno-octulosonate from 3-deoxy-D-manno-octulosonate and CTP: step 1/1.</text>
</comment>
<comment type="subcellular location">
    <subcellularLocation>
        <location evidence="2">Membrane</location>
        <topology evidence="2">Single-pass membrane protein</topology>
    </subcellularLocation>
</comment>
<comment type="alternative products">
    <event type="alternative splicing"/>
    <isoform>
        <id>Q9M4G3-1</id>
        <name>1</name>
        <sequence type="displayed"/>
    </isoform>
    <isoform>
        <id>Q9M4G3-2</id>
        <name>2</name>
        <sequence type="described" ref="VSP_058579 VSP_058580"/>
    </isoform>
</comment>
<comment type="tissue specificity">
    <text evidence="3">Ubiquitous.</text>
</comment>
<comment type="miscellaneous">
    <text evidence="1">Rhamnogalacturonan II (RG-II) RG-II is a structurally complex pectic polysaccharide present in the primary cell wall. RG-II consists of a linear 1,4-linked a-Dgalacturonic acid backbone with four distinct side chains, two of which contain apiosyl residues. Boric acid forms a diester with two apiosyl residues from separate RG-II molecules, thereby covalently cross-linking two RG-II molecules as a dimer.</text>
</comment>
<comment type="similarity">
    <text evidence="5">Belongs to the KdsB family.</text>
</comment>
<evidence type="ECO:0000250" key="1">
    <source>
        <dbReference type="UniProtKB" id="Q9C920"/>
    </source>
</evidence>
<evidence type="ECO:0000255" key="2"/>
<evidence type="ECO:0000269" key="3">
    <source>
    </source>
</evidence>
<evidence type="ECO:0000303" key="4">
    <source>
    </source>
</evidence>
<evidence type="ECO:0000305" key="5"/>
<evidence type="ECO:0000312" key="6">
    <source>
        <dbReference type="EMBL" id="AFW81111.1"/>
    </source>
</evidence>
<sequence>MPICAPSSDSSASASSGLGARVWVLHGLALGAAAAAAAVAYLYRRPTGFRSRAVGIIPARFASTRFEGKPLVPILGKPMIQRTWERVMLASSLDHVVVATDDERIAECCRGFGADVIMTSASCKNGSERCCEALKKLDKHYDIVVNIQGDEPLIEPEIIDGVVMSLQRAPDAVFSTAVTSLKPEDAFDTNRVKCVVDNLGYAIYFSRGLIPFNKSGNANPKYPYLLHLGIAGFDSKFLKIYPELPPTPLQMEEDLEQLKVLENGYRMKVIKVDHDAHGVDAPEDVEKIEALMRTRNIQ</sequence>
<proteinExistence type="evidence at protein level"/>
<dbReference type="EC" id="2.7.7.38" evidence="3"/>
<dbReference type="EMBL" id="AJ242474">
    <property type="protein sequence ID" value="CAB89846.1"/>
    <property type="molecule type" value="mRNA"/>
</dbReference>
<dbReference type="EMBL" id="AJ250331">
    <property type="protein sequence ID" value="CAB89847.1"/>
    <property type="molecule type" value="Genomic_DNA"/>
</dbReference>
<dbReference type="EMBL" id="CM000784">
    <property type="protein sequence ID" value="AFW81111.1"/>
    <property type="molecule type" value="Genomic_DNA"/>
</dbReference>
<dbReference type="EMBL" id="CM000784">
    <property type="protein sequence ID" value="AFW81112.1"/>
    <property type="molecule type" value="Genomic_DNA"/>
</dbReference>
<dbReference type="EMBL" id="EU970337">
    <property type="protein sequence ID" value="ACG42455.1"/>
    <property type="molecule type" value="mRNA"/>
</dbReference>
<dbReference type="RefSeq" id="NP_001105657.1">
    <molecule id="Q9M4G3-1"/>
    <property type="nucleotide sequence ID" value="NM_001112187.1"/>
</dbReference>
<dbReference type="SMR" id="Q9M4G3"/>
<dbReference type="FunCoup" id="Q9M4G3">
    <property type="interactions" value="132"/>
</dbReference>
<dbReference type="STRING" id="4577.Q9M4G3"/>
<dbReference type="PaxDb" id="4577-GRMZM2G119256_P02"/>
<dbReference type="EnsemblPlants" id="Zm00001eb343610_T001">
    <molecule id="Q9M4G3-1"/>
    <property type="protein sequence ID" value="Zm00001eb343610_P001"/>
    <property type="gene ID" value="Zm00001eb343610"/>
</dbReference>
<dbReference type="EnsemblPlants" id="Zm00001eb343610_T002">
    <molecule id="Q9M4G3-2"/>
    <property type="protein sequence ID" value="Zm00001eb343610_P002"/>
    <property type="gene ID" value="Zm00001eb343610"/>
</dbReference>
<dbReference type="GeneID" id="542667"/>
<dbReference type="Gramene" id="Zm00001eb343610_T001">
    <molecule id="Q9M4G3-1"/>
    <property type="protein sequence ID" value="Zm00001eb343610_P001"/>
    <property type="gene ID" value="Zm00001eb343610"/>
</dbReference>
<dbReference type="Gramene" id="Zm00001eb343610_T002">
    <molecule id="Q9M4G3-2"/>
    <property type="protein sequence ID" value="Zm00001eb343610_P002"/>
    <property type="gene ID" value="Zm00001eb343610"/>
</dbReference>
<dbReference type="KEGG" id="zma:542667"/>
<dbReference type="eggNOG" id="ENOG502QPIP">
    <property type="taxonomic scope" value="Eukaryota"/>
</dbReference>
<dbReference type="HOGENOM" id="CLU_065038_2_0_1"/>
<dbReference type="InParanoid" id="Q9M4G3"/>
<dbReference type="OMA" id="FMATCAK"/>
<dbReference type="OrthoDB" id="10262032at2759"/>
<dbReference type="BioCyc" id="MetaCyc:MONOMER-11935"/>
<dbReference type="BRENDA" id="2.7.7.38">
    <property type="organism ID" value="6752"/>
</dbReference>
<dbReference type="UniPathway" id="UPA00358">
    <property type="reaction ID" value="UER00476"/>
</dbReference>
<dbReference type="Proteomes" id="UP000007305">
    <property type="component" value="Chromosome 8"/>
</dbReference>
<dbReference type="ExpressionAtlas" id="Q9M4G3">
    <property type="expression patterns" value="baseline and differential"/>
</dbReference>
<dbReference type="GO" id="GO:0005829">
    <property type="term" value="C:cytosol"/>
    <property type="evidence" value="ECO:0000318"/>
    <property type="project" value="GO_Central"/>
</dbReference>
<dbReference type="GO" id="GO:0016020">
    <property type="term" value="C:membrane"/>
    <property type="evidence" value="ECO:0007669"/>
    <property type="project" value="UniProtKB-SubCell"/>
</dbReference>
<dbReference type="GO" id="GO:0008690">
    <property type="term" value="F:3-deoxy-manno-octulosonate cytidylyltransferase activity"/>
    <property type="evidence" value="ECO:0000318"/>
    <property type="project" value="GO_Central"/>
</dbReference>
<dbReference type="GO" id="GO:0071555">
    <property type="term" value="P:cell wall organization"/>
    <property type="evidence" value="ECO:0007669"/>
    <property type="project" value="UniProtKB-KW"/>
</dbReference>
<dbReference type="GO" id="GO:0033468">
    <property type="term" value="P:CMP-keto-3-deoxy-D-manno-octulosonic acid biosynthetic process"/>
    <property type="evidence" value="ECO:0007669"/>
    <property type="project" value="UniProtKB-UniPathway"/>
</dbReference>
<dbReference type="CDD" id="cd02517">
    <property type="entry name" value="CMP-KDO-Synthetase"/>
    <property type="match status" value="1"/>
</dbReference>
<dbReference type="FunFam" id="3.90.550.10:FF:000011">
    <property type="entry name" value="3-deoxy-manno-octulosonate cytidylyltransferase"/>
    <property type="match status" value="1"/>
</dbReference>
<dbReference type="Gene3D" id="3.90.550.10">
    <property type="entry name" value="Spore Coat Polysaccharide Biosynthesis Protein SpsA, Chain A"/>
    <property type="match status" value="1"/>
</dbReference>
<dbReference type="HAMAP" id="MF_00057">
    <property type="entry name" value="KdsB"/>
    <property type="match status" value="1"/>
</dbReference>
<dbReference type="InterPro" id="IPR003329">
    <property type="entry name" value="Cytidylyl_trans"/>
</dbReference>
<dbReference type="InterPro" id="IPR004528">
    <property type="entry name" value="KdsB"/>
</dbReference>
<dbReference type="InterPro" id="IPR029044">
    <property type="entry name" value="Nucleotide-diphossugar_trans"/>
</dbReference>
<dbReference type="NCBIfam" id="TIGR00466">
    <property type="entry name" value="kdsB"/>
    <property type="match status" value="1"/>
</dbReference>
<dbReference type="NCBIfam" id="NF003950">
    <property type="entry name" value="PRK05450.1-3"/>
    <property type="match status" value="1"/>
</dbReference>
<dbReference type="NCBIfam" id="NF003952">
    <property type="entry name" value="PRK05450.1-5"/>
    <property type="match status" value="1"/>
</dbReference>
<dbReference type="NCBIfam" id="NF009905">
    <property type="entry name" value="PRK13368.1"/>
    <property type="match status" value="1"/>
</dbReference>
<dbReference type="PANTHER" id="PTHR42866">
    <property type="entry name" value="3-DEOXY-MANNO-OCTULOSONATE CYTIDYLYLTRANSFERASE"/>
    <property type="match status" value="1"/>
</dbReference>
<dbReference type="PANTHER" id="PTHR42866:SF2">
    <property type="entry name" value="3-DEOXY-MANNO-OCTULOSONATE CYTIDYLYLTRANSFERASE, MITOCHONDRIAL"/>
    <property type="match status" value="1"/>
</dbReference>
<dbReference type="Pfam" id="PF02348">
    <property type="entry name" value="CTP_transf_3"/>
    <property type="match status" value="1"/>
</dbReference>
<dbReference type="SUPFAM" id="SSF53448">
    <property type="entry name" value="Nucleotide-diphospho-sugar transferases"/>
    <property type="match status" value="1"/>
</dbReference>
<gene>
    <name evidence="5" type="primary">KDSB</name>
    <name evidence="4" type="synonym">CKS</name>
    <name evidence="5" type="synonym">KDO1</name>
    <name evidence="5" type="ORF">GRMZM2G119256</name>
    <name evidence="6" type="ORF">ZEAMMB73_836886</name>
</gene>
<reference key="1">
    <citation type="journal article" date="2000" name="J. Biol. Chem.">
        <title>A maize homologue of the bacterial CMP-3-deoxy-D-manno-2-octulosonate (KDO) synthetases. Similar pathways operate in plants and bacteria for the activation of KDO prior to its incorporation into outer cellular envelopes.</title>
        <authorList>
            <person name="Royo J."/>
            <person name="Gomez E."/>
            <person name="Hueros G."/>
        </authorList>
    </citation>
    <scope>NUCLEOTIDE SEQUENCE [GENOMIC DNA / MRNA] (ISOFORM 1)</scope>
    <scope>TISSUE SPECIFICITY</scope>
    <scope>CATALYTIC ACTIVITY</scope>
    <scope>BIOPHYSICOCHEMICAL PROPERTIES</scope>
    <source>
        <tissue>Endosperm</tissue>
    </source>
</reference>
<reference key="2">
    <citation type="journal article" date="2009" name="Science">
        <title>The B73 maize genome: complexity, diversity, and dynamics.</title>
        <authorList>
            <person name="Schnable P.S."/>
            <person name="Ware D."/>
            <person name="Fulton R.S."/>
            <person name="Stein J.C."/>
            <person name="Wei F."/>
            <person name="Pasternak S."/>
            <person name="Liang C."/>
            <person name="Zhang J."/>
            <person name="Fulton L."/>
            <person name="Graves T.A."/>
            <person name="Minx P."/>
            <person name="Reily A.D."/>
            <person name="Courtney L."/>
            <person name="Kruchowski S.S."/>
            <person name="Tomlinson C."/>
            <person name="Strong C."/>
            <person name="Delehaunty K."/>
            <person name="Fronick C."/>
            <person name="Courtney B."/>
            <person name="Rock S.M."/>
            <person name="Belter E."/>
            <person name="Du F."/>
            <person name="Kim K."/>
            <person name="Abbott R.M."/>
            <person name="Cotton M."/>
            <person name="Levy A."/>
            <person name="Marchetto P."/>
            <person name="Ochoa K."/>
            <person name="Jackson S.M."/>
            <person name="Gillam B."/>
            <person name="Chen W."/>
            <person name="Yan L."/>
            <person name="Higginbotham J."/>
            <person name="Cardenas M."/>
            <person name="Waligorski J."/>
            <person name="Applebaum E."/>
            <person name="Phelps L."/>
            <person name="Falcone J."/>
            <person name="Kanchi K."/>
            <person name="Thane T."/>
            <person name="Scimone A."/>
            <person name="Thane N."/>
            <person name="Henke J."/>
            <person name="Wang T."/>
            <person name="Ruppert J."/>
            <person name="Shah N."/>
            <person name="Rotter K."/>
            <person name="Hodges J."/>
            <person name="Ingenthron E."/>
            <person name="Cordes M."/>
            <person name="Kohlberg S."/>
            <person name="Sgro J."/>
            <person name="Delgado B."/>
            <person name="Mead K."/>
            <person name="Chinwalla A."/>
            <person name="Leonard S."/>
            <person name="Crouse K."/>
            <person name="Collura K."/>
            <person name="Kudrna D."/>
            <person name="Currie J."/>
            <person name="He R."/>
            <person name="Angelova A."/>
            <person name="Rajasekar S."/>
            <person name="Mueller T."/>
            <person name="Lomeli R."/>
            <person name="Scara G."/>
            <person name="Ko A."/>
            <person name="Delaney K."/>
            <person name="Wissotski M."/>
            <person name="Lopez G."/>
            <person name="Campos D."/>
            <person name="Braidotti M."/>
            <person name="Ashley E."/>
            <person name="Golser W."/>
            <person name="Kim H."/>
            <person name="Lee S."/>
            <person name="Lin J."/>
            <person name="Dujmic Z."/>
            <person name="Kim W."/>
            <person name="Talag J."/>
            <person name="Zuccolo A."/>
            <person name="Fan C."/>
            <person name="Sebastian A."/>
            <person name="Kramer M."/>
            <person name="Spiegel L."/>
            <person name="Nascimento L."/>
            <person name="Zutavern T."/>
            <person name="Miller B."/>
            <person name="Ambroise C."/>
            <person name="Muller S."/>
            <person name="Spooner W."/>
            <person name="Narechania A."/>
            <person name="Ren L."/>
            <person name="Wei S."/>
            <person name="Kumari S."/>
            <person name="Faga B."/>
            <person name="Levy M.J."/>
            <person name="McMahan L."/>
            <person name="Van Buren P."/>
            <person name="Vaughn M.W."/>
            <person name="Ying K."/>
            <person name="Yeh C.-T."/>
            <person name="Emrich S.J."/>
            <person name="Jia Y."/>
            <person name="Kalyanaraman A."/>
            <person name="Hsia A.-P."/>
            <person name="Barbazuk W.B."/>
            <person name="Baucom R.S."/>
            <person name="Brutnell T.P."/>
            <person name="Carpita N.C."/>
            <person name="Chaparro C."/>
            <person name="Chia J.-M."/>
            <person name="Deragon J.-M."/>
            <person name="Estill J.C."/>
            <person name="Fu Y."/>
            <person name="Jeddeloh J.A."/>
            <person name="Han Y."/>
            <person name="Lee H."/>
            <person name="Li P."/>
            <person name="Lisch D.R."/>
            <person name="Liu S."/>
            <person name="Liu Z."/>
            <person name="Nagel D.H."/>
            <person name="McCann M.C."/>
            <person name="SanMiguel P."/>
            <person name="Myers A.M."/>
            <person name="Nettleton D."/>
            <person name="Nguyen J."/>
            <person name="Penning B.W."/>
            <person name="Ponnala L."/>
            <person name="Schneider K.L."/>
            <person name="Schwartz D.C."/>
            <person name="Sharma A."/>
            <person name="Soderlund C."/>
            <person name="Springer N.M."/>
            <person name="Sun Q."/>
            <person name="Wang H."/>
            <person name="Waterman M."/>
            <person name="Westerman R."/>
            <person name="Wolfgruber T.K."/>
            <person name="Yang L."/>
            <person name="Yu Y."/>
            <person name="Zhang L."/>
            <person name="Zhou S."/>
            <person name="Zhu Q."/>
            <person name="Bennetzen J.L."/>
            <person name="Dawe R.K."/>
            <person name="Jiang J."/>
            <person name="Jiang N."/>
            <person name="Presting G.G."/>
            <person name="Wessler S.R."/>
            <person name="Aluru S."/>
            <person name="Martienssen R.A."/>
            <person name="Clifton S.W."/>
            <person name="McCombie W.R."/>
            <person name="Wing R.A."/>
            <person name="Wilson R.K."/>
        </authorList>
    </citation>
    <scope>NUCLEOTIDE SEQUENCE [LARGE SCALE GENOMIC DNA]</scope>
    <source>
        <strain>cv. B73</strain>
    </source>
</reference>
<reference key="3">
    <citation type="journal article" date="2009" name="Plant Mol. Biol.">
        <title>Insights into corn genes derived from large-scale cDNA sequencing.</title>
        <authorList>
            <person name="Alexandrov N.N."/>
            <person name="Brover V.V."/>
            <person name="Freidin S."/>
            <person name="Troukhan M.E."/>
            <person name="Tatarinova T.V."/>
            <person name="Zhang H."/>
            <person name="Swaller T.J."/>
            <person name="Lu Y.-P."/>
            <person name="Bouck J."/>
            <person name="Flavell R.B."/>
            <person name="Feldmann K.A."/>
        </authorList>
    </citation>
    <scope>NUCLEOTIDE SEQUENCE [LARGE SCALE MRNA] (ISOFORM 1)</scope>
</reference>
<accession>Q9M4G3</accession>
<accession>B6TZC2</accession>
<accession>K7VDG8</accession>
<accession>Q9M4D3</accession>
<keyword id="KW-0025">Alternative splicing</keyword>
<keyword id="KW-0961">Cell wall biogenesis/degradation</keyword>
<keyword id="KW-0460">Magnesium</keyword>
<keyword id="KW-0472">Membrane</keyword>
<keyword id="KW-0548">Nucleotidyltransferase</keyword>
<keyword id="KW-1185">Reference proteome</keyword>
<keyword id="KW-0808">Transferase</keyword>
<keyword id="KW-0812">Transmembrane</keyword>
<keyword id="KW-1133">Transmembrane helix</keyword>
<feature type="chain" id="PRO_0000437957" description="3-deoxy-manno-octulosonate cytidylyltransferase">
    <location>
        <begin position="1"/>
        <end position="298"/>
    </location>
</feature>
<feature type="transmembrane region" description="Helical" evidence="2">
    <location>
        <begin position="22"/>
        <end position="42"/>
    </location>
</feature>
<feature type="splice variant" id="VSP_058579" description="In isoform 2.">
    <original>VIKVDHDAHGVD</original>
    <variation>QHIFLYGDQSGP</variation>
    <location>
        <begin position="269"/>
        <end position="280"/>
    </location>
</feature>
<feature type="splice variant" id="VSP_058580" description="In isoform 2.">
    <location>
        <begin position="281"/>
        <end position="298"/>
    </location>
</feature>
<feature type="sequence conflict" description="In Ref. 3; ACG42455." evidence="5" ref="3">
    <original>V</original>
    <variation>F</variation>
    <location>
        <position position="195"/>
    </location>
</feature>
<protein>
    <recommendedName>
        <fullName evidence="5">3-deoxy-manno-octulosonate cytidylyltransferase</fullName>
        <ecNumber evidence="3">2.7.7.38</ecNumber>
    </recommendedName>
    <alternativeName>
        <fullName evidence="4">CMP-2-keto-3-deoxyoctulosonic acid synthase</fullName>
        <shortName evidence="4">CMP-KDO synthase</shortName>
        <shortName evidence="4">ZmCKS</shortName>
    </alternativeName>
</protein>